<protein>
    <recommendedName>
        <fullName evidence="1">Ribosome-binding factor A</fullName>
    </recommendedName>
</protein>
<accession>A0QVM8</accession>
<accession>I7G8Z2</accession>
<proteinExistence type="inferred from homology"/>
<feature type="chain" id="PRO_1000000143" description="Ribosome-binding factor A">
    <location>
        <begin position="1"/>
        <end position="156"/>
    </location>
</feature>
<feature type="region of interest" description="Disordered" evidence="2">
    <location>
        <begin position="125"/>
        <end position="156"/>
    </location>
</feature>
<feature type="compositionally biased region" description="Basic and acidic residues" evidence="2">
    <location>
        <begin position="125"/>
        <end position="138"/>
    </location>
</feature>
<feature type="compositionally biased region" description="Acidic residues" evidence="2">
    <location>
        <begin position="145"/>
        <end position="156"/>
    </location>
</feature>
<evidence type="ECO:0000255" key="1">
    <source>
        <dbReference type="HAMAP-Rule" id="MF_00003"/>
    </source>
</evidence>
<evidence type="ECO:0000256" key="2">
    <source>
        <dbReference type="SAM" id="MobiDB-lite"/>
    </source>
</evidence>
<reference key="1">
    <citation type="submission" date="2006-10" db="EMBL/GenBank/DDBJ databases">
        <authorList>
            <person name="Fleischmann R.D."/>
            <person name="Dodson R.J."/>
            <person name="Haft D.H."/>
            <person name="Merkel J.S."/>
            <person name="Nelson W.C."/>
            <person name="Fraser C.M."/>
        </authorList>
    </citation>
    <scope>NUCLEOTIDE SEQUENCE [LARGE SCALE GENOMIC DNA]</scope>
    <source>
        <strain>ATCC 700084 / mc(2)155</strain>
    </source>
</reference>
<reference key="2">
    <citation type="journal article" date="2007" name="Genome Biol.">
        <title>Interrupted coding sequences in Mycobacterium smegmatis: authentic mutations or sequencing errors?</title>
        <authorList>
            <person name="Deshayes C."/>
            <person name="Perrodou E."/>
            <person name="Gallien S."/>
            <person name="Euphrasie D."/>
            <person name="Schaeffer C."/>
            <person name="Van-Dorsselaer A."/>
            <person name="Poch O."/>
            <person name="Lecompte O."/>
            <person name="Reyrat J.-M."/>
        </authorList>
    </citation>
    <scope>NUCLEOTIDE SEQUENCE [LARGE SCALE GENOMIC DNA]</scope>
    <source>
        <strain>ATCC 700084 / mc(2)155</strain>
    </source>
</reference>
<reference key="3">
    <citation type="journal article" date="2009" name="Genome Res.">
        <title>Ortho-proteogenomics: multiple proteomes investigation through orthology and a new MS-based protocol.</title>
        <authorList>
            <person name="Gallien S."/>
            <person name="Perrodou E."/>
            <person name="Carapito C."/>
            <person name="Deshayes C."/>
            <person name="Reyrat J.-M."/>
            <person name="Van Dorsselaer A."/>
            <person name="Poch O."/>
            <person name="Schaeffer C."/>
            <person name="Lecompte O."/>
        </authorList>
    </citation>
    <scope>NUCLEOTIDE SEQUENCE [LARGE SCALE GENOMIC DNA]</scope>
    <source>
        <strain>ATCC 700084 / mc(2)155</strain>
    </source>
</reference>
<name>RBFA_MYCS2</name>
<keyword id="KW-0963">Cytoplasm</keyword>
<keyword id="KW-1185">Reference proteome</keyword>
<keyword id="KW-0690">Ribosome biogenesis</keyword>
<comment type="function">
    <text evidence="1">One of several proteins that assist in the late maturation steps of the functional core of the 30S ribosomal subunit. Associates with free 30S ribosomal subunits (but not with 30S subunits that are part of 70S ribosomes or polysomes). Required for efficient processing of 16S rRNA. May interact with the 5'-terminal helix region of 16S rRNA.</text>
</comment>
<comment type="subunit">
    <text evidence="1">Monomer. Binds 30S ribosomal subunits, but not 50S ribosomal subunits or 70S ribosomes.</text>
</comment>
<comment type="subcellular location">
    <subcellularLocation>
        <location evidence="1">Cytoplasm</location>
    </subcellularLocation>
</comment>
<comment type="similarity">
    <text evidence="1">Belongs to the RbfA family.</text>
</comment>
<organism>
    <name type="scientific">Mycolicibacterium smegmatis (strain ATCC 700084 / mc(2)155)</name>
    <name type="common">Mycobacterium smegmatis</name>
    <dbReference type="NCBI Taxonomy" id="246196"/>
    <lineage>
        <taxon>Bacteria</taxon>
        <taxon>Bacillati</taxon>
        <taxon>Actinomycetota</taxon>
        <taxon>Actinomycetes</taxon>
        <taxon>Mycobacteriales</taxon>
        <taxon>Mycobacteriaceae</taxon>
        <taxon>Mycolicibacterium</taxon>
    </lineage>
</organism>
<dbReference type="EMBL" id="CP000480">
    <property type="protein sequence ID" value="ABK74547.1"/>
    <property type="molecule type" value="Genomic_DNA"/>
</dbReference>
<dbReference type="EMBL" id="CP001663">
    <property type="protein sequence ID" value="AFP39034.1"/>
    <property type="molecule type" value="Genomic_DNA"/>
</dbReference>
<dbReference type="RefSeq" id="WP_011728485.1">
    <property type="nucleotide sequence ID" value="NZ_SIJM01000063.1"/>
</dbReference>
<dbReference type="RefSeq" id="YP_886966.1">
    <property type="nucleotide sequence ID" value="NC_008596.1"/>
</dbReference>
<dbReference type="SMR" id="A0QVM8"/>
<dbReference type="STRING" id="246196.MSMEG_2629"/>
<dbReference type="PaxDb" id="246196-MSMEI_2566"/>
<dbReference type="GeneID" id="93457415"/>
<dbReference type="KEGG" id="msg:MSMEI_2566"/>
<dbReference type="KEGG" id="msm:MSMEG_2629"/>
<dbReference type="PATRIC" id="fig|246196.19.peg.2595"/>
<dbReference type="eggNOG" id="COG0858">
    <property type="taxonomic scope" value="Bacteria"/>
</dbReference>
<dbReference type="OrthoDB" id="307788at2"/>
<dbReference type="Proteomes" id="UP000000757">
    <property type="component" value="Chromosome"/>
</dbReference>
<dbReference type="Proteomes" id="UP000006158">
    <property type="component" value="Chromosome"/>
</dbReference>
<dbReference type="GO" id="GO:0005829">
    <property type="term" value="C:cytosol"/>
    <property type="evidence" value="ECO:0007669"/>
    <property type="project" value="TreeGrafter"/>
</dbReference>
<dbReference type="GO" id="GO:0043024">
    <property type="term" value="F:ribosomal small subunit binding"/>
    <property type="evidence" value="ECO:0007669"/>
    <property type="project" value="TreeGrafter"/>
</dbReference>
<dbReference type="GO" id="GO:0030490">
    <property type="term" value="P:maturation of SSU-rRNA"/>
    <property type="evidence" value="ECO:0007669"/>
    <property type="project" value="UniProtKB-UniRule"/>
</dbReference>
<dbReference type="FunFam" id="3.30.300.20:FF:000018">
    <property type="entry name" value="Ribosome-binding factor A"/>
    <property type="match status" value="1"/>
</dbReference>
<dbReference type="Gene3D" id="3.30.300.20">
    <property type="match status" value="1"/>
</dbReference>
<dbReference type="HAMAP" id="MF_00003">
    <property type="entry name" value="RbfA"/>
    <property type="match status" value="1"/>
</dbReference>
<dbReference type="InterPro" id="IPR015946">
    <property type="entry name" value="KH_dom-like_a/b"/>
</dbReference>
<dbReference type="InterPro" id="IPR000238">
    <property type="entry name" value="RbfA"/>
</dbReference>
<dbReference type="InterPro" id="IPR023799">
    <property type="entry name" value="RbfA_dom_sf"/>
</dbReference>
<dbReference type="InterPro" id="IPR020053">
    <property type="entry name" value="Ribosome-bd_factorA_CS"/>
</dbReference>
<dbReference type="NCBIfam" id="TIGR00082">
    <property type="entry name" value="rbfA"/>
    <property type="match status" value="1"/>
</dbReference>
<dbReference type="PANTHER" id="PTHR33515">
    <property type="entry name" value="RIBOSOME-BINDING FACTOR A, CHLOROPLASTIC-RELATED"/>
    <property type="match status" value="1"/>
</dbReference>
<dbReference type="PANTHER" id="PTHR33515:SF1">
    <property type="entry name" value="RIBOSOME-BINDING FACTOR A, CHLOROPLASTIC-RELATED"/>
    <property type="match status" value="1"/>
</dbReference>
<dbReference type="Pfam" id="PF02033">
    <property type="entry name" value="RBFA"/>
    <property type="match status" value="1"/>
</dbReference>
<dbReference type="SUPFAM" id="SSF89919">
    <property type="entry name" value="Ribosome-binding factor A, RbfA"/>
    <property type="match status" value="1"/>
</dbReference>
<dbReference type="PROSITE" id="PS01319">
    <property type="entry name" value="RBFA"/>
    <property type="match status" value="1"/>
</dbReference>
<sequence length="156" mass="16594">MADPARAKRLAKRISTIVASAIEYEIKDPRLAGVTITDAKVSGDLHDATLYYTVLGASLDEDPDYEGAAAALEKAKGVLRTKVGAGTGVRFTPTLAFVRDTVPDAAHRMEELLARARAADEDLARVREGAKHAGDPDPYRVGGAEDTDGDTDGDER</sequence>
<gene>
    <name evidence="1" type="primary">rbfA</name>
    <name type="ordered locus">MSMEG_2629</name>
    <name type="ordered locus">MSMEI_2566</name>
</gene>